<name>CHSY_RAPSA</name>
<protein>
    <recommendedName>
        <fullName>Chalcone synthase</fullName>
        <ecNumber>2.3.1.74</ecNumber>
    </recommendedName>
    <alternativeName>
        <fullName>Naringenin-chalcone synthase</fullName>
    </alternativeName>
</protein>
<accession>O22652</accession>
<reference key="1">
    <citation type="submission" date="1997-10" db="EMBL/GenBank/DDBJ databases">
        <authorList>
            <person name="Kwon S.I."/>
            <person name="An C.-S."/>
        </authorList>
    </citation>
    <scope>NUCLEOTIDE SEQUENCE [MRNA]</scope>
</reference>
<keyword id="KW-0012">Acyltransferase</keyword>
<keyword id="KW-0284">Flavonoid biosynthesis</keyword>
<keyword id="KW-1185">Reference proteome</keyword>
<keyword id="KW-0808">Transferase</keyword>
<feature type="chain" id="PRO_0000216044" description="Chalcone synthase">
    <location>
        <begin position="1"/>
        <end position="394"/>
    </location>
</feature>
<feature type="active site" evidence="1">
    <location>
        <position position="168"/>
    </location>
</feature>
<gene>
    <name type="primary">CHS</name>
</gene>
<dbReference type="EC" id="2.3.1.74"/>
<dbReference type="EMBL" id="AF031922">
    <property type="protein sequence ID" value="AAB87072.1"/>
    <property type="molecule type" value="mRNA"/>
</dbReference>
<dbReference type="SMR" id="O22652"/>
<dbReference type="UniPathway" id="UPA00154"/>
<dbReference type="Proteomes" id="UP000504610">
    <property type="component" value="Unplaced"/>
</dbReference>
<dbReference type="GO" id="GO:0016210">
    <property type="term" value="F:naringenin-chalcone synthase activity"/>
    <property type="evidence" value="ECO:0007669"/>
    <property type="project" value="UniProtKB-EC"/>
</dbReference>
<dbReference type="GO" id="GO:0009813">
    <property type="term" value="P:flavonoid biosynthetic process"/>
    <property type="evidence" value="ECO:0007669"/>
    <property type="project" value="UniProtKB-UniPathway"/>
</dbReference>
<dbReference type="GO" id="GO:0030639">
    <property type="term" value="P:polyketide biosynthetic process"/>
    <property type="evidence" value="ECO:0007669"/>
    <property type="project" value="TreeGrafter"/>
</dbReference>
<dbReference type="CDD" id="cd00831">
    <property type="entry name" value="CHS_like"/>
    <property type="match status" value="1"/>
</dbReference>
<dbReference type="FunFam" id="3.40.47.10:FF:000014">
    <property type="entry name" value="Chalcone synthase 1"/>
    <property type="match status" value="1"/>
</dbReference>
<dbReference type="FunFam" id="3.40.47.10:FF:000025">
    <property type="entry name" value="Chalcone synthase 2"/>
    <property type="match status" value="1"/>
</dbReference>
<dbReference type="Gene3D" id="3.40.47.10">
    <property type="match status" value="2"/>
</dbReference>
<dbReference type="InterPro" id="IPR012328">
    <property type="entry name" value="Chalcone/stilbene_synt_C"/>
</dbReference>
<dbReference type="InterPro" id="IPR001099">
    <property type="entry name" value="Chalcone/stilbene_synt_N"/>
</dbReference>
<dbReference type="InterPro" id="IPR018088">
    <property type="entry name" value="Chalcone/stilbene_synthase_AS"/>
</dbReference>
<dbReference type="InterPro" id="IPR011141">
    <property type="entry name" value="Polyketide_synthase_type-III"/>
</dbReference>
<dbReference type="InterPro" id="IPR016039">
    <property type="entry name" value="Thiolase-like"/>
</dbReference>
<dbReference type="PANTHER" id="PTHR11877:SF14">
    <property type="entry name" value="CHALCONE SYNTHASE"/>
    <property type="match status" value="1"/>
</dbReference>
<dbReference type="PANTHER" id="PTHR11877">
    <property type="entry name" value="HYDROXYMETHYLGLUTARYL-COA SYNTHASE"/>
    <property type="match status" value="1"/>
</dbReference>
<dbReference type="Pfam" id="PF02797">
    <property type="entry name" value="Chal_sti_synt_C"/>
    <property type="match status" value="1"/>
</dbReference>
<dbReference type="Pfam" id="PF00195">
    <property type="entry name" value="Chal_sti_synt_N"/>
    <property type="match status" value="1"/>
</dbReference>
<dbReference type="PIRSF" id="PIRSF000451">
    <property type="entry name" value="PKS_III"/>
    <property type="match status" value="1"/>
</dbReference>
<dbReference type="SUPFAM" id="SSF53901">
    <property type="entry name" value="Thiolase-like"/>
    <property type="match status" value="2"/>
</dbReference>
<dbReference type="PROSITE" id="PS00441">
    <property type="entry name" value="CHALCONE_SYNTH"/>
    <property type="match status" value="1"/>
</dbReference>
<comment type="function">
    <text>The primary product of this enzyme is 4,2',4',6'-tetrahydroxychalcone (also termed naringenin-chalcone or chalcone) which can under specific conditions spontaneously isomerize into naringenin.</text>
</comment>
<comment type="catalytic activity">
    <reaction evidence="1">
        <text>(E)-4-coumaroyl-CoA + 3 malonyl-CoA + 3 H(+) = 2',4,4',6'-tetrahydroxychalcone + 3 CO2 + 4 CoA</text>
        <dbReference type="Rhea" id="RHEA:11128"/>
        <dbReference type="ChEBI" id="CHEBI:15378"/>
        <dbReference type="ChEBI" id="CHEBI:15413"/>
        <dbReference type="ChEBI" id="CHEBI:16526"/>
        <dbReference type="ChEBI" id="CHEBI:57287"/>
        <dbReference type="ChEBI" id="CHEBI:57384"/>
        <dbReference type="ChEBI" id="CHEBI:85008"/>
        <dbReference type="EC" id="2.3.1.74"/>
    </reaction>
</comment>
<comment type="pathway">
    <text>Secondary metabolite biosynthesis; flavonoid biosynthesis.</text>
</comment>
<comment type="similarity">
    <text evidence="2">Belongs to the thiolase-like superfamily. Chalcone/stilbene synthases family.</text>
</comment>
<organism>
    <name type="scientific">Raphanus sativus</name>
    <name type="common">Radish</name>
    <name type="synonym">Raphanus raphanistrum var. sativus</name>
    <dbReference type="NCBI Taxonomy" id="3726"/>
    <lineage>
        <taxon>Eukaryota</taxon>
        <taxon>Viridiplantae</taxon>
        <taxon>Streptophyta</taxon>
        <taxon>Embryophyta</taxon>
        <taxon>Tracheophyta</taxon>
        <taxon>Spermatophyta</taxon>
        <taxon>Magnoliopsida</taxon>
        <taxon>eudicotyledons</taxon>
        <taxon>Gunneridae</taxon>
        <taxon>Pentapetalae</taxon>
        <taxon>rosids</taxon>
        <taxon>malvids</taxon>
        <taxon>Brassicales</taxon>
        <taxon>Brassicaceae</taxon>
        <taxon>Brassiceae</taxon>
        <taxon>Raphanus</taxon>
    </lineage>
</organism>
<sequence>MVGTTSSLDEIRKAQRADGPAGILAIGTANPANHVLQAEYPDYYFRITNSEHMTDLKEKFKRMCDKSTIRKRHMHLTEEFLKENPNMCAYMAPSLDARQDIVVVEVPKLGKEAAVKAIKEWGQPKSKITHVVFCTTSGVDMPGADYQLTKLLGLRPSVKRLMMYQQGCFAGGTVLRLAKDLAENNRGARVLVVCSEITAVTFRGPSDTHLDSLVGQALFSDGAAALIVGSDPDVSAGEKPIFEMVSAAQTILPDSDGAIDGHLREVGITFHLLKDVPGLISKNIEKSLDEAFKPLGISDWNSLFWIAHPGGPAILDDVEKKLGLKAEKMRATRHVLSEYGNMSSACVLFILDEMRRKSLDDGVATTGEGLEWGVLFGFGPGLTVETVVLHSVPV</sequence>
<proteinExistence type="evidence at transcript level"/>
<evidence type="ECO:0000255" key="1">
    <source>
        <dbReference type="PROSITE-ProRule" id="PRU10023"/>
    </source>
</evidence>
<evidence type="ECO:0000305" key="2"/>